<evidence type="ECO:0000255" key="1">
    <source>
        <dbReference type="HAMAP-Rule" id="MF_01027"/>
    </source>
</evidence>
<organism>
    <name type="scientific">Rubrobacter xylanophilus (strain DSM 9941 / JCM 11954 / NBRC 16129 / PRD-1)</name>
    <dbReference type="NCBI Taxonomy" id="266117"/>
    <lineage>
        <taxon>Bacteria</taxon>
        <taxon>Bacillati</taxon>
        <taxon>Actinomycetota</taxon>
        <taxon>Rubrobacteria</taxon>
        <taxon>Rubrobacterales</taxon>
        <taxon>Rubrobacteraceae</taxon>
        <taxon>Rubrobacter</taxon>
    </lineage>
</organism>
<proteinExistence type="inferred from homology"/>
<gene>
    <name evidence="1" type="primary">leuC2</name>
    <name type="ordered locus">Rxyl_1693</name>
</gene>
<dbReference type="EC" id="4.2.1.33" evidence="1"/>
<dbReference type="EMBL" id="CP000386">
    <property type="protein sequence ID" value="ABG04653.1"/>
    <property type="molecule type" value="Genomic_DNA"/>
</dbReference>
<dbReference type="RefSeq" id="WP_011564670.1">
    <property type="nucleotide sequence ID" value="NC_008148.1"/>
</dbReference>
<dbReference type="SMR" id="Q1AVC5"/>
<dbReference type="STRING" id="266117.Rxyl_1693"/>
<dbReference type="KEGG" id="rxy:Rxyl_1693"/>
<dbReference type="eggNOG" id="COG0065">
    <property type="taxonomic scope" value="Bacteria"/>
</dbReference>
<dbReference type="HOGENOM" id="CLU_006714_3_4_11"/>
<dbReference type="OrthoDB" id="9802769at2"/>
<dbReference type="PhylomeDB" id="Q1AVC5"/>
<dbReference type="UniPathway" id="UPA00048">
    <property type="reaction ID" value="UER00071"/>
</dbReference>
<dbReference type="Proteomes" id="UP000006637">
    <property type="component" value="Chromosome"/>
</dbReference>
<dbReference type="GO" id="GO:0003861">
    <property type="term" value="F:3-isopropylmalate dehydratase activity"/>
    <property type="evidence" value="ECO:0007669"/>
    <property type="project" value="UniProtKB-UniRule"/>
</dbReference>
<dbReference type="GO" id="GO:0051539">
    <property type="term" value="F:4 iron, 4 sulfur cluster binding"/>
    <property type="evidence" value="ECO:0007669"/>
    <property type="project" value="UniProtKB-KW"/>
</dbReference>
<dbReference type="GO" id="GO:0046872">
    <property type="term" value="F:metal ion binding"/>
    <property type="evidence" value="ECO:0007669"/>
    <property type="project" value="UniProtKB-KW"/>
</dbReference>
<dbReference type="GO" id="GO:0009098">
    <property type="term" value="P:L-leucine biosynthetic process"/>
    <property type="evidence" value="ECO:0007669"/>
    <property type="project" value="UniProtKB-UniRule"/>
</dbReference>
<dbReference type="CDD" id="cd01583">
    <property type="entry name" value="IPMI"/>
    <property type="match status" value="1"/>
</dbReference>
<dbReference type="Gene3D" id="3.30.499.10">
    <property type="entry name" value="Aconitase, domain 3"/>
    <property type="match status" value="2"/>
</dbReference>
<dbReference type="HAMAP" id="MF_01027">
    <property type="entry name" value="LeuC_type2"/>
    <property type="match status" value="1"/>
</dbReference>
<dbReference type="InterPro" id="IPR015931">
    <property type="entry name" value="Acnase/IPM_dHydase_lsu_aba_1/3"/>
</dbReference>
<dbReference type="InterPro" id="IPR001030">
    <property type="entry name" value="Acoase/IPM_deHydtase_lsu_aba"/>
</dbReference>
<dbReference type="InterPro" id="IPR036008">
    <property type="entry name" value="Aconitase_4Fe-4S_dom"/>
</dbReference>
<dbReference type="InterPro" id="IPR011826">
    <property type="entry name" value="HAcnase/IPMdehydase_lsu_prok"/>
</dbReference>
<dbReference type="InterPro" id="IPR006251">
    <property type="entry name" value="Homoacnase/IPMdehydase_lsu"/>
</dbReference>
<dbReference type="InterPro" id="IPR050067">
    <property type="entry name" value="IPM_dehydratase_rel_enz"/>
</dbReference>
<dbReference type="InterPro" id="IPR033941">
    <property type="entry name" value="IPMI_cat"/>
</dbReference>
<dbReference type="NCBIfam" id="TIGR01343">
    <property type="entry name" value="hacA_fam"/>
    <property type="match status" value="1"/>
</dbReference>
<dbReference type="NCBIfam" id="TIGR02086">
    <property type="entry name" value="IPMI_arch"/>
    <property type="match status" value="1"/>
</dbReference>
<dbReference type="NCBIfam" id="NF001614">
    <property type="entry name" value="PRK00402.1"/>
    <property type="match status" value="1"/>
</dbReference>
<dbReference type="PANTHER" id="PTHR43822:SF16">
    <property type="entry name" value="3-ISOPROPYLMALATE DEHYDRATASE LARGE SUBUNIT 2"/>
    <property type="match status" value="1"/>
</dbReference>
<dbReference type="PANTHER" id="PTHR43822">
    <property type="entry name" value="HOMOACONITASE, MITOCHONDRIAL-RELATED"/>
    <property type="match status" value="1"/>
</dbReference>
<dbReference type="Pfam" id="PF00330">
    <property type="entry name" value="Aconitase"/>
    <property type="match status" value="2"/>
</dbReference>
<dbReference type="PRINTS" id="PR00415">
    <property type="entry name" value="ACONITASE"/>
</dbReference>
<dbReference type="SUPFAM" id="SSF53732">
    <property type="entry name" value="Aconitase iron-sulfur domain"/>
    <property type="match status" value="1"/>
</dbReference>
<accession>Q1AVC5</accession>
<feature type="chain" id="PRO_0000319844" description="3-isopropylmalate dehydratase large subunit 2">
    <location>
        <begin position="1"/>
        <end position="424"/>
    </location>
</feature>
<feature type="binding site" evidence="1">
    <location>
        <position position="299"/>
    </location>
    <ligand>
        <name>[4Fe-4S] cluster</name>
        <dbReference type="ChEBI" id="CHEBI:49883"/>
    </ligand>
</feature>
<feature type="binding site" evidence="1">
    <location>
        <position position="359"/>
    </location>
    <ligand>
        <name>[4Fe-4S] cluster</name>
        <dbReference type="ChEBI" id="CHEBI:49883"/>
    </ligand>
</feature>
<feature type="binding site" evidence="1">
    <location>
        <position position="362"/>
    </location>
    <ligand>
        <name>[4Fe-4S] cluster</name>
        <dbReference type="ChEBI" id="CHEBI:49883"/>
    </ligand>
</feature>
<comment type="function">
    <text evidence="1">Catalyzes the isomerization between 2-isopropylmalate and 3-isopropylmalate, via the formation of 2-isopropylmaleate.</text>
</comment>
<comment type="catalytic activity">
    <reaction evidence="1">
        <text>(2R,3S)-3-isopropylmalate = (2S)-2-isopropylmalate</text>
        <dbReference type="Rhea" id="RHEA:32287"/>
        <dbReference type="ChEBI" id="CHEBI:1178"/>
        <dbReference type="ChEBI" id="CHEBI:35121"/>
        <dbReference type="EC" id="4.2.1.33"/>
    </reaction>
</comment>
<comment type="cofactor">
    <cofactor evidence="1">
        <name>[4Fe-4S] cluster</name>
        <dbReference type="ChEBI" id="CHEBI:49883"/>
    </cofactor>
    <text evidence="1">Binds 1 [4Fe-4S] cluster per subunit.</text>
</comment>
<comment type="pathway">
    <text evidence="1">Amino-acid biosynthesis; L-leucine biosynthesis; L-leucine from 3-methyl-2-oxobutanoate: step 2/4.</text>
</comment>
<comment type="subunit">
    <text evidence="1">Heterodimer of LeuC and LeuD.</text>
</comment>
<comment type="similarity">
    <text evidence="1">Belongs to the aconitase/IPM isomerase family. LeuC type 2 subfamily.</text>
</comment>
<keyword id="KW-0004">4Fe-4S</keyword>
<keyword id="KW-0028">Amino-acid biosynthesis</keyword>
<keyword id="KW-0100">Branched-chain amino acid biosynthesis</keyword>
<keyword id="KW-0408">Iron</keyword>
<keyword id="KW-0411">Iron-sulfur</keyword>
<keyword id="KW-0432">Leucine biosynthesis</keyword>
<keyword id="KW-0456">Lyase</keyword>
<keyword id="KW-0479">Metal-binding</keyword>
<keyword id="KW-1185">Reference proteome</keyword>
<protein>
    <recommendedName>
        <fullName evidence="1">3-isopropylmalate dehydratase large subunit 2</fullName>
        <ecNumber evidence="1">4.2.1.33</ecNumber>
    </recommendedName>
    <alternativeName>
        <fullName evidence="1">Alpha-IPM isomerase 2</fullName>
        <shortName evidence="1">IPMI 2</shortName>
    </alternativeName>
    <alternativeName>
        <fullName evidence="1">Isopropylmalate isomerase 2</fullName>
    </alternativeName>
</protein>
<sequence length="424" mass="44822">MPHTLAEKLLISHSEVDDASPGDIIMVRCDLVMANDVSGPVAFRQMERMGVQRVFDPSKVVMVSDHFMPAKDARSAALQKRLKSWSDLQGVYYYGQGRGGIEHTVLVEDGWIVPGMVIAGGDSHTCTYGALGAFGTGLGSTDIAACLAFGEFWQQVPGTIQVEFTGHKGSFVAGKDLILAVIADIGVGGGANAVLEFVGEGAASLSLDDRLAVANMAVEAGAETGIFPADEVTARYLDRRADREWHPERSDPDASYVRKVKIDLNSLEPLVALPHSPGNVVAVSEARGTKIDQVYIGNCSNGTITDLRQTAEILRGNRVHPDVRAIIVPASQKVYRQAISEGLIDVFVEAGAVVSTPTCGACFGGHMGVLAEGERAITTTNRNFKGRMGSPLAEVCLANAYVAAAAAVAGEIVEPASICSEPVR</sequence>
<name>LEUC2_RUBXD</name>
<reference key="1">
    <citation type="submission" date="2006-06" db="EMBL/GenBank/DDBJ databases">
        <title>Complete sequence of Rubrobacter xylanophilus DSM 9941.</title>
        <authorList>
            <consortium name="US DOE Joint Genome Institute"/>
            <person name="Copeland A."/>
            <person name="Lucas S."/>
            <person name="Lapidus A."/>
            <person name="Barry K."/>
            <person name="Detter J.C."/>
            <person name="Glavina del Rio T."/>
            <person name="Hammon N."/>
            <person name="Israni S."/>
            <person name="Dalin E."/>
            <person name="Tice H."/>
            <person name="Pitluck S."/>
            <person name="Munk A.C."/>
            <person name="Brettin T."/>
            <person name="Bruce D."/>
            <person name="Han C."/>
            <person name="Tapia R."/>
            <person name="Gilna P."/>
            <person name="Schmutz J."/>
            <person name="Larimer F."/>
            <person name="Land M."/>
            <person name="Hauser L."/>
            <person name="Kyrpides N."/>
            <person name="Lykidis A."/>
            <person name="da Costa M.S."/>
            <person name="Rainey F.A."/>
            <person name="Empadinhas N."/>
            <person name="Jolivet E."/>
            <person name="Battista J.R."/>
            <person name="Richardson P."/>
        </authorList>
    </citation>
    <scope>NUCLEOTIDE SEQUENCE [LARGE SCALE GENOMIC DNA]</scope>
    <source>
        <strain>DSM 9941 / JCM 11954 / NBRC 16129 / PRD-1</strain>
    </source>
</reference>